<gene>
    <name type="primary">murB</name>
    <name type="ordered locus">jhp_1313</name>
</gene>
<proteinExistence type="inferred from homology"/>
<keyword id="KW-0131">Cell cycle</keyword>
<keyword id="KW-0132">Cell division</keyword>
<keyword id="KW-0133">Cell shape</keyword>
<keyword id="KW-0961">Cell wall biogenesis/degradation</keyword>
<keyword id="KW-0963">Cytoplasm</keyword>
<keyword id="KW-0274">FAD</keyword>
<keyword id="KW-0285">Flavoprotein</keyword>
<keyword id="KW-0521">NADP</keyword>
<keyword id="KW-0560">Oxidoreductase</keyword>
<keyword id="KW-0573">Peptidoglycan synthesis</keyword>
<comment type="function">
    <text evidence="1">Cell wall formation.</text>
</comment>
<comment type="catalytic activity">
    <reaction>
        <text>UDP-N-acetyl-alpha-D-muramate + NADP(+) = UDP-N-acetyl-3-O-(1-carboxyvinyl)-alpha-D-glucosamine + NADPH + H(+)</text>
        <dbReference type="Rhea" id="RHEA:12248"/>
        <dbReference type="ChEBI" id="CHEBI:15378"/>
        <dbReference type="ChEBI" id="CHEBI:57783"/>
        <dbReference type="ChEBI" id="CHEBI:58349"/>
        <dbReference type="ChEBI" id="CHEBI:68483"/>
        <dbReference type="ChEBI" id="CHEBI:70757"/>
        <dbReference type="EC" id="1.3.1.98"/>
    </reaction>
</comment>
<comment type="cofactor">
    <cofactor evidence="1">
        <name>FAD</name>
        <dbReference type="ChEBI" id="CHEBI:57692"/>
    </cofactor>
</comment>
<comment type="pathway">
    <text>Cell wall biogenesis; peptidoglycan biosynthesis.</text>
</comment>
<comment type="subcellular location">
    <subcellularLocation>
        <location evidence="1">Cytoplasm</location>
    </subcellularLocation>
</comment>
<comment type="similarity">
    <text evidence="2">Belongs to the MurB family.</text>
</comment>
<name>MURB_HELPJ</name>
<feature type="chain" id="PRO_0000179219" description="UDP-N-acetylenolpyruvoylglucosamine reductase">
    <location>
        <begin position="1"/>
        <end position="259"/>
    </location>
</feature>
<feature type="active site" evidence="1">
    <location>
        <position position="142"/>
    </location>
</feature>
<feature type="active site" description="Proton donor" evidence="1">
    <location>
        <position position="184"/>
    </location>
</feature>
<feature type="active site" evidence="1">
    <location>
        <position position="254"/>
    </location>
</feature>
<sequence length="259" mass="28757">MLETTIDFSRYSSVKIGAPLKVSVLENDNEISQEHQIIGLANNLLIAPDVKNLALLGKNYDYICDKGEWVEVGGAANASKIFNYFRANDLEGLEFLGQLPGTLGALVKMNAGMKEFEIKNVLESACVNGEWLEKEALGLDYRSSGFNGVVLRARFKKTHGFREGVLKACKSMRKSHPKLPNFGSCFKNPPNDYAGRLLEGVGLRGYCLKRVGFAKEHANFLVNLGGAEFEEALDLIELAKTRVLQEYGIHLEEEVKILR</sequence>
<dbReference type="EC" id="1.3.1.98"/>
<dbReference type="EMBL" id="AE001439">
    <property type="protein sequence ID" value="AAD06886.1"/>
    <property type="molecule type" value="Genomic_DNA"/>
</dbReference>
<dbReference type="PIR" id="B71823">
    <property type="entry name" value="B71823"/>
</dbReference>
<dbReference type="RefSeq" id="WP_000894898.1">
    <property type="nucleotide sequence ID" value="NC_000921.1"/>
</dbReference>
<dbReference type="SMR" id="Q9ZJJ4"/>
<dbReference type="KEGG" id="hpj:jhp_1313"/>
<dbReference type="PATRIC" id="fig|85963.30.peg.1249"/>
<dbReference type="eggNOG" id="COG0812">
    <property type="taxonomic scope" value="Bacteria"/>
</dbReference>
<dbReference type="UniPathway" id="UPA00219"/>
<dbReference type="Proteomes" id="UP000000804">
    <property type="component" value="Chromosome"/>
</dbReference>
<dbReference type="GO" id="GO:0005829">
    <property type="term" value="C:cytosol"/>
    <property type="evidence" value="ECO:0007669"/>
    <property type="project" value="TreeGrafter"/>
</dbReference>
<dbReference type="GO" id="GO:0050660">
    <property type="term" value="F:flavin adenine dinucleotide binding"/>
    <property type="evidence" value="ECO:0007669"/>
    <property type="project" value="InterPro"/>
</dbReference>
<dbReference type="GO" id="GO:0008762">
    <property type="term" value="F:UDP-N-acetylmuramate dehydrogenase activity"/>
    <property type="evidence" value="ECO:0007669"/>
    <property type="project" value="UniProtKB-UniRule"/>
</dbReference>
<dbReference type="GO" id="GO:0051301">
    <property type="term" value="P:cell division"/>
    <property type="evidence" value="ECO:0007669"/>
    <property type="project" value="UniProtKB-KW"/>
</dbReference>
<dbReference type="GO" id="GO:0071555">
    <property type="term" value="P:cell wall organization"/>
    <property type="evidence" value="ECO:0007669"/>
    <property type="project" value="UniProtKB-KW"/>
</dbReference>
<dbReference type="GO" id="GO:0009252">
    <property type="term" value="P:peptidoglycan biosynthetic process"/>
    <property type="evidence" value="ECO:0007669"/>
    <property type="project" value="UniProtKB-UniRule"/>
</dbReference>
<dbReference type="GO" id="GO:0008360">
    <property type="term" value="P:regulation of cell shape"/>
    <property type="evidence" value="ECO:0007669"/>
    <property type="project" value="UniProtKB-KW"/>
</dbReference>
<dbReference type="Gene3D" id="3.30.465.10">
    <property type="match status" value="1"/>
</dbReference>
<dbReference type="Gene3D" id="3.90.78.10">
    <property type="entry name" value="UDP-N-acetylenolpyruvoylglucosamine reductase, C-terminal domain"/>
    <property type="match status" value="1"/>
</dbReference>
<dbReference type="HAMAP" id="MF_00037">
    <property type="entry name" value="MurB"/>
    <property type="match status" value="1"/>
</dbReference>
<dbReference type="InterPro" id="IPR036318">
    <property type="entry name" value="FAD-bd_PCMH-like_sf"/>
</dbReference>
<dbReference type="InterPro" id="IPR016169">
    <property type="entry name" value="FAD-bd_PCMH_sub2"/>
</dbReference>
<dbReference type="InterPro" id="IPR003170">
    <property type="entry name" value="MurB"/>
</dbReference>
<dbReference type="InterPro" id="IPR011601">
    <property type="entry name" value="MurB_C"/>
</dbReference>
<dbReference type="InterPro" id="IPR036635">
    <property type="entry name" value="MurB_C_sf"/>
</dbReference>
<dbReference type="NCBIfam" id="TIGR00179">
    <property type="entry name" value="murB"/>
    <property type="match status" value="1"/>
</dbReference>
<dbReference type="NCBIfam" id="NF010479">
    <property type="entry name" value="PRK13904.1"/>
    <property type="match status" value="1"/>
</dbReference>
<dbReference type="PANTHER" id="PTHR21071">
    <property type="entry name" value="UDP-N-ACETYLENOLPYRUVOYLGLUCOSAMINE REDUCTASE"/>
    <property type="match status" value="1"/>
</dbReference>
<dbReference type="PANTHER" id="PTHR21071:SF4">
    <property type="entry name" value="UDP-N-ACETYLENOLPYRUVOYLGLUCOSAMINE REDUCTASE"/>
    <property type="match status" value="1"/>
</dbReference>
<dbReference type="Pfam" id="PF02873">
    <property type="entry name" value="MurB_C"/>
    <property type="match status" value="1"/>
</dbReference>
<dbReference type="SUPFAM" id="SSF56176">
    <property type="entry name" value="FAD-binding/transporter-associated domain-like"/>
    <property type="match status" value="1"/>
</dbReference>
<dbReference type="SUPFAM" id="SSF56194">
    <property type="entry name" value="Uridine diphospho-N-Acetylenolpyruvylglucosamine reductase, MurB, C-terminal domain"/>
    <property type="match status" value="1"/>
</dbReference>
<reference key="1">
    <citation type="journal article" date="1999" name="Nature">
        <title>Genomic sequence comparison of two unrelated isolates of the human gastric pathogen Helicobacter pylori.</title>
        <authorList>
            <person name="Alm R.A."/>
            <person name="Ling L.-S.L."/>
            <person name="Moir D.T."/>
            <person name="King B.L."/>
            <person name="Brown E.D."/>
            <person name="Doig P.C."/>
            <person name="Smith D.R."/>
            <person name="Noonan B."/>
            <person name="Guild B.C."/>
            <person name="deJonge B.L."/>
            <person name="Carmel G."/>
            <person name="Tummino P.J."/>
            <person name="Caruso A."/>
            <person name="Uria-Nickelsen M."/>
            <person name="Mills D.M."/>
            <person name="Ives C."/>
            <person name="Gibson R."/>
            <person name="Merberg D."/>
            <person name="Mills S.D."/>
            <person name="Jiang Q."/>
            <person name="Taylor D.E."/>
            <person name="Vovis G.F."/>
            <person name="Trust T.J."/>
        </authorList>
    </citation>
    <scope>NUCLEOTIDE SEQUENCE [LARGE SCALE GENOMIC DNA]</scope>
    <source>
        <strain>J99 / ATCC 700824</strain>
    </source>
</reference>
<organism>
    <name type="scientific">Helicobacter pylori (strain J99 / ATCC 700824)</name>
    <name type="common">Campylobacter pylori J99</name>
    <dbReference type="NCBI Taxonomy" id="85963"/>
    <lineage>
        <taxon>Bacteria</taxon>
        <taxon>Pseudomonadati</taxon>
        <taxon>Campylobacterota</taxon>
        <taxon>Epsilonproteobacteria</taxon>
        <taxon>Campylobacterales</taxon>
        <taxon>Helicobacteraceae</taxon>
        <taxon>Helicobacter</taxon>
    </lineage>
</organism>
<accession>Q9ZJJ4</accession>
<protein>
    <recommendedName>
        <fullName>UDP-N-acetylenolpyruvoylglucosamine reductase</fullName>
        <ecNumber>1.3.1.98</ecNumber>
    </recommendedName>
    <alternativeName>
        <fullName>UDP-N-acetylmuramate dehydrogenase</fullName>
    </alternativeName>
</protein>
<evidence type="ECO:0000250" key="1"/>
<evidence type="ECO:0000305" key="2"/>